<name>UPP_PSYIN</name>
<evidence type="ECO:0000255" key="1">
    <source>
        <dbReference type="HAMAP-Rule" id="MF_01218"/>
    </source>
</evidence>
<keyword id="KW-0021">Allosteric enzyme</keyword>
<keyword id="KW-0328">Glycosyltransferase</keyword>
<keyword id="KW-0342">GTP-binding</keyword>
<keyword id="KW-0460">Magnesium</keyword>
<keyword id="KW-0547">Nucleotide-binding</keyword>
<keyword id="KW-1185">Reference proteome</keyword>
<keyword id="KW-0808">Transferase</keyword>
<accession>A1SVA9</accession>
<dbReference type="EC" id="2.4.2.9" evidence="1"/>
<dbReference type="EMBL" id="CP000510">
    <property type="protein sequence ID" value="ABM03424.1"/>
    <property type="molecule type" value="Genomic_DNA"/>
</dbReference>
<dbReference type="RefSeq" id="WP_011769984.1">
    <property type="nucleotide sequence ID" value="NC_008709.1"/>
</dbReference>
<dbReference type="SMR" id="A1SVA9"/>
<dbReference type="STRING" id="357804.Ping_1628"/>
<dbReference type="KEGG" id="pin:Ping_1628"/>
<dbReference type="eggNOG" id="COG0035">
    <property type="taxonomic scope" value="Bacteria"/>
</dbReference>
<dbReference type="HOGENOM" id="CLU_067096_2_2_6"/>
<dbReference type="OrthoDB" id="9781675at2"/>
<dbReference type="UniPathway" id="UPA00574">
    <property type="reaction ID" value="UER00636"/>
</dbReference>
<dbReference type="Proteomes" id="UP000000639">
    <property type="component" value="Chromosome"/>
</dbReference>
<dbReference type="GO" id="GO:0005525">
    <property type="term" value="F:GTP binding"/>
    <property type="evidence" value="ECO:0007669"/>
    <property type="project" value="UniProtKB-KW"/>
</dbReference>
<dbReference type="GO" id="GO:0000287">
    <property type="term" value="F:magnesium ion binding"/>
    <property type="evidence" value="ECO:0007669"/>
    <property type="project" value="UniProtKB-UniRule"/>
</dbReference>
<dbReference type="GO" id="GO:0004845">
    <property type="term" value="F:uracil phosphoribosyltransferase activity"/>
    <property type="evidence" value="ECO:0007669"/>
    <property type="project" value="UniProtKB-UniRule"/>
</dbReference>
<dbReference type="GO" id="GO:0044206">
    <property type="term" value="P:UMP salvage"/>
    <property type="evidence" value="ECO:0007669"/>
    <property type="project" value="UniProtKB-UniRule"/>
</dbReference>
<dbReference type="GO" id="GO:0006223">
    <property type="term" value="P:uracil salvage"/>
    <property type="evidence" value="ECO:0007669"/>
    <property type="project" value="InterPro"/>
</dbReference>
<dbReference type="CDD" id="cd06223">
    <property type="entry name" value="PRTases_typeI"/>
    <property type="match status" value="1"/>
</dbReference>
<dbReference type="FunFam" id="3.40.50.2020:FF:000003">
    <property type="entry name" value="Uracil phosphoribosyltransferase"/>
    <property type="match status" value="1"/>
</dbReference>
<dbReference type="Gene3D" id="3.40.50.2020">
    <property type="match status" value="1"/>
</dbReference>
<dbReference type="HAMAP" id="MF_01218_B">
    <property type="entry name" value="Upp_B"/>
    <property type="match status" value="1"/>
</dbReference>
<dbReference type="InterPro" id="IPR000836">
    <property type="entry name" value="PRibTrfase_dom"/>
</dbReference>
<dbReference type="InterPro" id="IPR029057">
    <property type="entry name" value="PRTase-like"/>
</dbReference>
<dbReference type="InterPro" id="IPR034332">
    <property type="entry name" value="Upp_B"/>
</dbReference>
<dbReference type="InterPro" id="IPR050054">
    <property type="entry name" value="UPRTase/APRTase"/>
</dbReference>
<dbReference type="InterPro" id="IPR005765">
    <property type="entry name" value="Ura_phspho_trans"/>
</dbReference>
<dbReference type="NCBIfam" id="NF001097">
    <property type="entry name" value="PRK00129.1"/>
    <property type="match status" value="1"/>
</dbReference>
<dbReference type="NCBIfam" id="TIGR01091">
    <property type="entry name" value="upp"/>
    <property type="match status" value="1"/>
</dbReference>
<dbReference type="PANTHER" id="PTHR32315">
    <property type="entry name" value="ADENINE PHOSPHORIBOSYLTRANSFERASE"/>
    <property type="match status" value="1"/>
</dbReference>
<dbReference type="PANTHER" id="PTHR32315:SF4">
    <property type="entry name" value="URACIL PHOSPHORIBOSYLTRANSFERASE, CHLOROPLASTIC"/>
    <property type="match status" value="1"/>
</dbReference>
<dbReference type="Pfam" id="PF14681">
    <property type="entry name" value="UPRTase"/>
    <property type="match status" value="1"/>
</dbReference>
<dbReference type="SUPFAM" id="SSF53271">
    <property type="entry name" value="PRTase-like"/>
    <property type="match status" value="1"/>
</dbReference>
<feature type="chain" id="PRO_1000053769" description="Uracil phosphoribosyltransferase">
    <location>
        <begin position="1"/>
        <end position="208"/>
    </location>
</feature>
<feature type="binding site" evidence="1">
    <location>
        <position position="78"/>
    </location>
    <ligand>
        <name>5-phospho-alpha-D-ribose 1-diphosphate</name>
        <dbReference type="ChEBI" id="CHEBI:58017"/>
    </ligand>
</feature>
<feature type="binding site" evidence="1">
    <location>
        <position position="103"/>
    </location>
    <ligand>
        <name>5-phospho-alpha-D-ribose 1-diphosphate</name>
        <dbReference type="ChEBI" id="CHEBI:58017"/>
    </ligand>
</feature>
<feature type="binding site" evidence="1">
    <location>
        <begin position="130"/>
        <end position="138"/>
    </location>
    <ligand>
        <name>5-phospho-alpha-D-ribose 1-diphosphate</name>
        <dbReference type="ChEBI" id="CHEBI:58017"/>
    </ligand>
</feature>
<feature type="binding site" evidence="1">
    <location>
        <position position="193"/>
    </location>
    <ligand>
        <name>uracil</name>
        <dbReference type="ChEBI" id="CHEBI:17568"/>
    </ligand>
</feature>
<feature type="binding site" evidence="1">
    <location>
        <begin position="198"/>
        <end position="200"/>
    </location>
    <ligand>
        <name>uracil</name>
        <dbReference type="ChEBI" id="CHEBI:17568"/>
    </ligand>
</feature>
<feature type="binding site" evidence="1">
    <location>
        <position position="199"/>
    </location>
    <ligand>
        <name>5-phospho-alpha-D-ribose 1-diphosphate</name>
        <dbReference type="ChEBI" id="CHEBI:58017"/>
    </ligand>
</feature>
<gene>
    <name evidence="1" type="primary">upp</name>
    <name type="ordered locus">Ping_1628</name>
</gene>
<organism>
    <name type="scientific">Psychromonas ingrahamii (strain DSM 17664 / CCUG 51855 / 37)</name>
    <dbReference type="NCBI Taxonomy" id="357804"/>
    <lineage>
        <taxon>Bacteria</taxon>
        <taxon>Pseudomonadati</taxon>
        <taxon>Pseudomonadota</taxon>
        <taxon>Gammaproteobacteria</taxon>
        <taxon>Alteromonadales</taxon>
        <taxon>Psychromonadaceae</taxon>
        <taxon>Psychromonas</taxon>
    </lineage>
</organism>
<comment type="function">
    <text evidence="1">Catalyzes the conversion of uracil and 5-phospho-alpha-D-ribose 1-diphosphate (PRPP) to UMP and diphosphate.</text>
</comment>
<comment type="catalytic activity">
    <reaction evidence="1">
        <text>UMP + diphosphate = 5-phospho-alpha-D-ribose 1-diphosphate + uracil</text>
        <dbReference type="Rhea" id="RHEA:13017"/>
        <dbReference type="ChEBI" id="CHEBI:17568"/>
        <dbReference type="ChEBI" id="CHEBI:33019"/>
        <dbReference type="ChEBI" id="CHEBI:57865"/>
        <dbReference type="ChEBI" id="CHEBI:58017"/>
        <dbReference type="EC" id="2.4.2.9"/>
    </reaction>
</comment>
<comment type="cofactor">
    <cofactor evidence="1">
        <name>Mg(2+)</name>
        <dbReference type="ChEBI" id="CHEBI:18420"/>
    </cofactor>
    <text evidence="1">Binds 1 Mg(2+) ion per subunit. The magnesium is bound as Mg-PRPP.</text>
</comment>
<comment type="activity regulation">
    <text evidence="1">Allosterically activated by GTP.</text>
</comment>
<comment type="pathway">
    <text evidence="1">Pyrimidine metabolism; UMP biosynthesis via salvage pathway; UMP from uracil: step 1/1.</text>
</comment>
<comment type="similarity">
    <text evidence="1">Belongs to the UPRTase family.</text>
</comment>
<reference key="1">
    <citation type="journal article" date="2008" name="BMC Genomics">
        <title>Genomics of an extreme psychrophile, Psychromonas ingrahamii.</title>
        <authorList>
            <person name="Riley M."/>
            <person name="Staley J.T."/>
            <person name="Danchin A."/>
            <person name="Wang T.Z."/>
            <person name="Brettin T.S."/>
            <person name="Hauser L.J."/>
            <person name="Land M.L."/>
            <person name="Thompson L.S."/>
        </authorList>
    </citation>
    <scope>NUCLEOTIDE SEQUENCE [LARGE SCALE GENOMIC DNA]</scope>
    <source>
        <strain>DSM 17664 / CCUG 51855 / 37</strain>
    </source>
</reference>
<protein>
    <recommendedName>
        <fullName evidence="1">Uracil phosphoribosyltransferase</fullName>
        <ecNumber evidence="1">2.4.2.9</ecNumber>
    </recommendedName>
    <alternativeName>
        <fullName evidence="1">UMP pyrophosphorylase</fullName>
    </alternativeName>
    <alternativeName>
        <fullName evidence="1">UPRTase</fullName>
    </alternativeName>
</protein>
<proteinExistence type="inferred from homology"/>
<sequence>MKVIEVKHPLIQHKIGLMREADISTKRFREIAREVGSLLTYEATKNLELETVKIQGWNGEVEVQQIKGKKATVVPILRAGLGMMDGVLEHMPSAKISVVGIYRDEKTLEPVPYFQKLVSNIDERLAIVVDPMLATGGSMISTIDLIKKAGCTRIVVLVLVAAPEGLKALEAAHPDLEVYTASIDDHLDEQGYIVPGLGDAGDKIFGTK</sequence>